<proteinExistence type="inferred from homology"/>
<comment type="function">
    <text evidence="1">F(1)F(0) ATP synthase produces ATP from ADP in the presence of a proton or sodium gradient. F-type ATPases consist of two structural domains, F(1) containing the extramembraneous catalytic core and F(0) containing the membrane proton channel, linked together by a central stalk and a peripheral stalk. During catalysis, ATP synthesis in the catalytic domain of F(1) is coupled via a rotary mechanism of the central stalk subunits to proton translocation.</text>
</comment>
<comment type="function">
    <text evidence="1">This protein is part of the stalk that links CF(0) to CF(1). It either transmits conformational changes from CF(0) to CF(1) or is implicated in proton conduction.</text>
</comment>
<comment type="subunit">
    <text evidence="1">F-type ATPases have 2 components, F(1) - the catalytic core - and F(0) - the membrane proton channel. F(1) has five subunits: alpha(3), beta(3), gamma(1), delta(1), epsilon(1). F(0) has three main subunits: a(1), b(2) and c(10-14). The alpha and beta chains form an alternating ring which encloses part of the gamma chain. F(1) is attached to F(0) by a central stalk formed by the gamma and epsilon chains, while a peripheral stalk is formed by the delta and b chains.</text>
</comment>
<comment type="subcellular location">
    <subcellularLocation>
        <location evidence="1">Cell inner membrane</location>
        <topology evidence="1">Peripheral membrane protein</topology>
    </subcellularLocation>
</comment>
<comment type="similarity">
    <text evidence="1">Belongs to the ATPase delta chain family.</text>
</comment>
<comment type="sequence caution" evidence="2">
    <conflict type="erroneous initiation">
        <sequence resource="EMBL-CDS" id="ABG64587"/>
    </conflict>
</comment>
<organism>
    <name type="scientific">Chelativorans sp. (strain BNC1)</name>
    <dbReference type="NCBI Taxonomy" id="266779"/>
    <lineage>
        <taxon>Bacteria</taxon>
        <taxon>Pseudomonadati</taxon>
        <taxon>Pseudomonadota</taxon>
        <taxon>Alphaproteobacteria</taxon>
        <taxon>Hyphomicrobiales</taxon>
        <taxon>Phyllobacteriaceae</taxon>
        <taxon>Chelativorans</taxon>
    </lineage>
</organism>
<sequence>MAQSGSMISGVAGRYARSLFELAQETGAVSVVEGDLVRFEEMLEGSEDLKRLIKSPVFSADEQLKALGAVLDRARISGLVGNFLRLVARNRRLFAVPQMIRAFREIAAEARGETAAEVTSAHALSAEQERELKAALKSVVGKDVTVKVTVDPSLLAGLIVKVGSRQIDTSLKTKLNSLKLALKEVG</sequence>
<keyword id="KW-0066">ATP synthesis</keyword>
<keyword id="KW-0997">Cell inner membrane</keyword>
<keyword id="KW-1003">Cell membrane</keyword>
<keyword id="KW-0139">CF(1)</keyword>
<keyword id="KW-0375">Hydrogen ion transport</keyword>
<keyword id="KW-0406">Ion transport</keyword>
<keyword id="KW-0472">Membrane</keyword>
<keyword id="KW-0813">Transport</keyword>
<evidence type="ECO:0000255" key="1">
    <source>
        <dbReference type="HAMAP-Rule" id="MF_01416"/>
    </source>
</evidence>
<evidence type="ECO:0000305" key="2"/>
<reference key="1">
    <citation type="submission" date="2006-06" db="EMBL/GenBank/DDBJ databases">
        <title>Complete sequence of chromosome of Mesorhizobium sp. BNC1.</title>
        <authorList>
            <consortium name="US DOE Joint Genome Institute"/>
            <person name="Copeland A."/>
            <person name="Lucas S."/>
            <person name="Lapidus A."/>
            <person name="Barry K."/>
            <person name="Detter J.C."/>
            <person name="Glavina del Rio T."/>
            <person name="Hammon N."/>
            <person name="Israni S."/>
            <person name="Dalin E."/>
            <person name="Tice H."/>
            <person name="Pitluck S."/>
            <person name="Chertkov O."/>
            <person name="Brettin T."/>
            <person name="Bruce D."/>
            <person name="Han C."/>
            <person name="Tapia R."/>
            <person name="Gilna P."/>
            <person name="Schmutz J."/>
            <person name="Larimer F."/>
            <person name="Land M."/>
            <person name="Hauser L."/>
            <person name="Kyrpides N."/>
            <person name="Mikhailova N."/>
            <person name="Richardson P."/>
        </authorList>
    </citation>
    <scope>NUCLEOTIDE SEQUENCE [LARGE SCALE GENOMIC DNA]</scope>
    <source>
        <strain>BNC1</strain>
    </source>
</reference>
<accession>Q11DD8</accession>
<feature type="chain" id="PRO_0000382122" description="ATP synthase subunit delta">
    <location>
        <begin position="1"/>
        <end position="186"/>
    </location>
</feature>
<dbReference type="EMBL" id="CP000390">
    <property type="protein sequence ID" value="ABG64587.1"/>
    <property type="status" value="ALT_INIT"/>
    <property type="molecule type" value="Genomic_DNA"/>
</dbReference>
<dbReference type="SMR" id="Q11DD8"/>
<dbReference type="STRING" id="266779.Meso_3215"/>
<dbReference type="KEGG" id="mes:Meso_3215"/>
<dbReference type="eggNOG" id="COG0712">
    <property type="taxonomic scope" value="Bacteria"/>
</dbReference>
<dbReference type="HOGENOM" id="CLU_085114_0_1_5"/>
<dbReference type="OrthoDB" id="9796185at2"/>
<dbReference type="GO" id="GO:0005886">
    <property type="term" value="C:plasma membrane"/>
    <property type="evidence" value="ECO:0007669"/>
    <property type="project" value="UniProtKB-SubCell"/>
</dbReference>
<dbReference type="GO" id="GO:0045259">
    <property type="term" value="C:proton-transporting ATP synthase complex"/>
    <property type="evidence" value="ECO:0007669"/>
    <property type="project" value="UniProtKB-KW"/>
</dbReference>
<dbReference type="GO" id="GO:0046933">
    <property type="term" value="F:proton-transporting ATP synthase activity, rotational mechanism"/>
    <property type="evidence" value="ECO:0007669"/>
    <property type="project" value="UniProtKB-UniRule"/>
</dbReference>
<dbReference type="Gene3D" id="1.10.520.20">
    <property type="entry name" value="N-terminal domain of the delta subunit of the F1F0-ATP synthase"/>
    <property type="match status" value="1"/>
</dbReference>
<dbReference type="HAMAP" id="MF_01416">
    <property type="entry name" value="ATP_synth_delta_bact"/>
    <property type="match status" value="1"/>
</dbReference>
<dbReference type="InterPro" id="IPR026015">
    <property type="entry name" value="ATP_synth_OSCP/delta_N_sf"/>
</dbReference>
<dbReference type="InterPro" id="IPR020781">
    <property type="entry name" value="ATPase_OSCP/d_CS"/>
</dbReference>
<dbReference type="InterPro" id="IPR000711">
    <property type="entry name" value="ATPase_OSCP/dsu"/>
</dbReference>
<dbReference type="NCBIfam" id="TIGR01145">
    <property type="entry name" value="ATP_synt_delta"/>
    <property type="match status" value="1"/>
</dbReference>
<dbReference type="NCBIfam" id="NF004402">
    <property type="entry name" value="PRK05758.2-2"/>
    <property type="match status" value="1"/>
</dbReference>
<dbReference type="NCBIfam" id="NF004406">
    <property type="entry name" value="PRK05758.3-2"/>
    <property type="match status" value="1"/>
</dbReference>
<dbReference type="PANTHER" id="PTHR11910">
    <property type="entry name" value="ATP SYNTHASE DELTA CHAIN"/>
    <property type="match status" value="1"/>
</dbReference>
<dbReference type="Pfam" id="PF00213">
    <property type="entry name" value="OSCP"/>
    <property type="match status" value="1"/>
</dbReference>
<dbReference type="PRINTS" id="PR00125">
    <property type="entry name" value="ATPASEDELTA"/>
</dbReference>
<dbReference type="SUPFAM" id="SSF47928">
    <property type="entry name" value="N-terminal domain of the delta subunit of the F1F0-ATP synthase"/>
    <property type="match status" value="1"/>
</dbReference>
<dbReference type="PROSITE" id="PS00389">
    <property type="entry name" value="ATPASE_DELTA"/>
    <property type="match status" value="1"/>
</dbReference>
<gene>
    <name evidence="1" type="primary">atpH</name>
    <name type="ordered locus">Meso_3215</name>
</gene>
<protein>
    <recommendedName>
        <fullName evidence="1">ATP synthase subunit delta</fullName>
    </recommendedName>
    <alternativeName>
        <fullName evidence="1">ATP synthase F(1) sector subunit delta</fullName>
    </alternativeName>
    <alternativeName>
        <fullName evidence="1">F-type ATPase subunit delta</fullName>
        <shortName evidence="1">F-ATPase subunit delta</shortName>
    </alternativeName>
</protein>
<name>ATPD_CHESB</name>